<reference key="1">
    <citation type="journal article" date="1993" name="Nucleic Acids Res.">
        <title>Zinc finger-like motifs in rat ribosomal proteins S27 and S29.</title>
        <authorList>
            <person name="Chan Y.-L."/>
            <person name="Suzuki K."/>
            <person name="Olvera J."/>
            <person name="Wool I.G."/>
        </authorList>
    </citation>
    <scope>NUCLEOTIDE SEQUENCE [MRNA]</scope>
    <scope>PROTEIN SEQUENCE OF 2-34</scope>
    <source>
        <strain>Sprague-Dawley</strain>
        <tissue>Liver</tissue>
    </source>
</reference>
<reference key="2">
    <citation type="journal article" date="2000" name="J. Neurochem.">
        <title>Evolutionarily distinct classes of S27 ribosomal proteins with differential mRNA expression in rat hypothalamus.</title>
        <authorList>
            <person name="Thomas E.A."/>
            <person name="Alvarez C.E."/>
            <person name="Sutcliffe J.G."/>
        </authorList>
    </citation>
    <scope>TISSUE SPECIFICITY</scope>
</reference>
<protein>
    <recommendedName>
        <fullName evidence="5">Small ribosomal subunit protein eS27-like</fullName>
    </recommendedName>
    <alternativeName>
        <fullName>40S ribosomal protein S27-like</fullName>
    </alternativeName>
</protein>
<keyword id="KW-0903">Direct protein sequencing</keyword>
<keyword id="KW-0479">Metal-binding</keyword>
<keyword id="KW-1185">Reference proteome</keyword>
<keyword id="KW-0687">Ribonucleoprotein</keyword>
<keyword id="KW-0689">Ribosomal protein</keyword>
<keyword id="KW-0862">Zinc</keyword>
<keyword id="KW-0863">Zinc-finger</keyword>
<feature type="initiator methionine" description="Removed" evidence="4">
    <location>
        <position position="1"/>
    </location>
</feature>
<feature type="chain" id="PRO_0000149056" description="Small ribosomal subunit protein eS27-like">
    <location>
        <begin position="2"/>
        <end position="84"/>
    </location>
</feature>
<feature type="zinc finger region" description="C4-type" evidence="1">
    <location>
        <begin position="37"/>
        <end position="59"/>
    </location>
</feature>
<feature type="region of interest" description="Disordered" evidence="2">
    <location>
        <begin position="1"/>
        <end position="23"/>
    </location>
</feature>
<feature type="compositionally biased region" description="Basic and acidic residues" evidence="2">
    <location>
        <begin position="1"/>
        <end position="16"/>
    </location>
</feature>
<proteinExistence type="evidence at protein level"/>
<comment type="cofactor">
    <cofactor evidence="5">
        <name>Zn(2+)</name>
        <dbReference type="ChEBI" id="CHEBI:29105"/>
    </cofactor>
    <text evidence="5">Binds 1 zinc ion per subunit.</text>
</comment>
<comment type="tissue specificity">
    <text evidence="3">Expressed predominantly in the striatum, hypothalamus, heart and liver and at lower levels in the cerebellum, hippocampus and pons.</text>
</comment>
<comment type="similarity">
    <text evidence="5">Belongs to the eukaryotic ribosomal protein eS27 family.</text>
</comment>
<evidence type="ECO:0000255" key="1"/>
<evidence type="ECO:0000256" key="2">
    <source>
        <dbReference type="SAM" id="MobiDB-lite"/>
    </source>
</evidence>
<evidence type="ECO:0000269" key="3">
    <source>
    </source>
</evidence>
<evidence type="ECO:0000269" key="4">
    <source>
    </source>
</evidence>
<evidence type="ECO:0000305" key="5"/>
<name>RS27L_RAT</name>
<sequence length="84" mass="9477">MPLARDLLHPSLEEEKKKHKKKRLVQSPNSYFMDVKCPGCYKITTVFSHAQTVVLCVGCSTVLCQPTGGKARLTEGCSFRRKQH</sequence>
<gene>
    <name type="primary">Rps27l</name>
</gene>
<organism>
    <name type="scientific">Rattus norvegicus</name>
    <name type="common">Rat</name>
    <dbReference type="NCBI Taxonomy" id="10116"/>
    <lineage>
        <taxon>Eukaryota</taxon>
        <taxon>Metazoa</taxon>
        <taxon>Chordata</taxon>
        <taxon>Craniata</taxon>
        <taxon>Vertebrata</taxon>
        <taxon>Euteleostomi</taxon>
        <taxon>Mammalia</taxon>
        <taxon>Eutheria</taxon>
        <taxon>Euarchontoglires</taxon>
        <taxon>Glires</taxon>
        <taxon>Rodentia</taxon>
        <taxon>Myomorpha</taxon>
        <taxon>Muroidea</taxon>
        <taxon>Muridae</taxon>
        <taxon>Murinae</taxon>
        <taxon>Rattus</taxon>
    </lineage>
</organism>
<dbReference type="EMBL" id="X59375">
    <property type="protein sequence ID" value="CAA42019.1"/>
    <property type="molecule type" value="mRNA"/>
</dbReference>
<dbReference type="PIR" id="S30297">
    <property type="entry name" value="R3RT27"/>
</dbReference>
<dbReference type="RefSeq" id="NP_001263406.1">
    <property type="nucleotide sequence ID" value="NM_001276477.1"/>
</dbReference>
<dbReference type="RefSeq" id="XP_038938077.1">
    <property type="nucleotide sequence ID" value="XM_039082149.2"/>
</dbReference>
<dbReference type="SMR" id="P24051"/>
<dbReference type="BioGRID" id="596358">
    <property type="interactions" value="1"/>
</dbReference>
<dbReference type="FunCoup" id="P24051">
    <property type="interactions" value="2040"/>
</dbReference>
<dbReference type="IntAct" id="P24051">
    <property type="interactions" value="1"/>
</dbReference>
<dbReference type="STRING" id="10116.ENSRNOP00000071243"/>
<dbReference type="iPTMnet" id="P24051"/>
<dbReference type="PhosphoSitePlus" id="P24051"/>
<dbReference type="jPOST" id="P24051"/>
<dbReference type="PaxDb" id="10116-ENSRNOP00000067129"/>
<dbReference type="PeptideAtlas" id="P24051"/>
<dbReference type="Ensembl" id="ENSRNOT00000090977.2">
    <property type="protein sequence ID" value="ENSRNOP00000071243.1"/>
    <property type="gene ID" value="ENSRNOG00000050473.3"/>
</dbReference>
<dbReference type="GeneID" id="681429"/>
<dbReference type="KEGG" id="rno:681429"/>
<dbReference type="AGR" id="RGD:1595396"/>
<dbReference type="CTD" id="51065"/>
<dbReference type="RGD" id="1595396">
    <property type="gene designation" value="Rps27l"/>
</dbReference>
<dbReference type="VEuPathDB" id="HostDB:ENSRNOG00000066445"/>
<dbReference type="eggNOG" id="KOG1779">
    <property type="taxonomic scope" value="Eukaryota"/>
</dbReference>
<dbReference type="GeneTree" id="ENSGT00950000182891"/>
<dbReference type="InParanoid" id="P24051"/>
<dbReference type="Reactome" id="R-RNO-156827">
    <property type="pathway name" value="L13a-mediated translational silencing of Ceruloplasmin expression"/>
</dbReference>
<dbReference type="Reactome" id="R-RNO-1799339">
    <property type="pathway name" value="SRP-dependent cotranslational protein targeting to membrane"/>
</dbReference>
<dbReference type="Reactome" id="R-RNO-6791226">
    <property type="pathway name" value="Major pathway of rRNA processing in the nucleolus and cytosol"/>
</dbReference>
<dbReference type="Reactome" id="R-RNO-72649">
    <property type="pathway name" value="Translation initiation complex formation"/>
</dbReference>
<dbReference type="Reactome" id="R-RNO-72689">
    <property type="pathway name" value="Formation of a pool of free 40S subunits"/>
</dbReference>
<dbReference type="Reactome" id="R-RNO-72695">
    <property type="pathway name" value="Formation of the ternary complex, and subsequently, the 43S complex"/>
</dbReference>
<dbReference type="Reactome" id="R-RNO-72702">
    <property type="pathway name" value="Ribosomal scanning and start codon recognition"/>
</dbReference>
<dbReference type="Reactome" id="R-RNO-72706">
    <property type="pathway name" value="GTP hydrolysis and joining of the 60S ribosomal subunit"/>
</dbReference>
<dbReference type="Reactome" id="R-RNO-975956">
    <property type="pathway name" value="Nonsense Mediated Decay (NMD) independent of the Exon Junction Complex (EJC)"/>
</dbReference>
<dbReference type="Reactome" id="R-RNO-975957">
    <property type="pathway name" value="Nonsense Mediated Decay (NMD) enhanced by the Exon Junction Complex (EJC)"/>
</dbReference>
<dbReference type="PRO" id="PR:P24051"/>
<dbReference type="Proteomes" id="UP000002494">
    <property type="component" value="Chromosome 8"/>
</dbReference>
<dbReference type="Bgee" id="ENSRNOG00000050473">
    <property type="expression patterns" value="Expressed in pancreas and 20 other cell types or tissues"/>
</dbReference>
<dbReference type="GO" id="GO:0022627">
    <property type="term" value="C:cytosolic small ribosomal subunit"/>
    <property type="evidence" value="ECO:0000318"/>
    <property type="project" value="GO_Central"/>
</dbReference>
<dbReference type="GO" id="GO:0005634">
    <property type="term" value="C:nucleus"/>
    <property type="evidence" value="ECO:0000266"/>
    <property type="project" value="RGD"/>
</dbReference>
<dbReference type="GO" id="GO:0003723">
    <property type="term" value="F:RNA binding"/>
    <property type="evidence" value="ECO:0000318"/>
    <property type="project" value="GO_Central"/>
</dbReference>
<dbReference type="GO" id="GO:0003735">
    <property type="term" value="F:structural constituent of ribosome"/>
    <property type="evidence" value="ECO:0000318"/>
    <property type="project" value="GO_Central"/>
</dbReference>
<dbReference type="GO" id="GO:0008494">
    <property type="term" value="F:translation activator activity"/>
    <property type="evidence" value="ECO:0000266"/>
    <property type="project" value="RGD"/>
</dbReference>
<dbReference type="GO" id="GO:0008270">
    <property type="term" value="F:zinc ion binding"/>
    <property type="evidence" value="ECO:0007669"/>
    <property type="project" value="UniProtKB-KW"/>
</dbReference>
<dbReference type="GO" id="GO:0030330">
    <property type="term" value="P:DNA damage response, signal transduction by p53 class mediator"/>
    <property type="evidence" value="ECO:0000266"/>
    <property type="project" value="RGD"/>
</dbReference>
<dbReference type="GO" id="GO:0042771">
    <property type="term" value="P:intrinsic apoptotic signaling pathway in response to DNA damage by p53 class mediator"/>
    <property type="evidence" value="ECO:0000266"/>
    <property type="project" value="RGD"/>
</dbReference>
<dbReference type="GO" id="GO:0031571">
    <property type="term" value="P:mitotic G1 DNA damage checkpoint signaling"/>
    <property type="evidence" value="ECO:0000266"/>
    <property type="project" value="RGD"/>
</dbReference>
<dbReference type="GO" id="GO:0045727">
    <property type="term" value="P:positive regulation of translation"/>
    <property type="evidence" value="ECO:0000266"/>
    <property type="project" value="RGD"/>
</dbReference>
<dbReference type="GO" id="GO:0000028">
    <property type="term" value="P:ribosomal small subunit assembly"/>
    <property type="evidence" value="ECO:0000318"/>
    <property type="project" value="GO_Central"/>
</dbReference>
<dbReference type="GO" id="GO:0006412">
    <property type="term" value="P:translation"/>
    <property type="evidence" value="ECO:0007669"/>
    <property type="project" value="InterPro"/>
</dbReference>
<dbReference type="FunFam" id="2.20.25.100:FF:000001">
    <property type="entry name" value="40S ribosomal protein S27"/>
    <property type="match status" value="1"/>
</dbReference>
<dbReference type="Gene3D" id="2.20.25.100">
    <property type="entry name" value="Zn-binding ribosomal proteins"/>
    <property type="match status" value="1"/>
</dbReference>
<dbReference type="HAMAP" id="MF_00371">
    <property type="entry name" value="Ribosomal_eS27"/>
    <property type="match status" value="1"/>
</dbReference>
<dbReference type="InterPro" id="IPR000592">
    <property type="entry name" value="Ribosomal_eS27"/>
</dbReference>
<dbReference type="InterPro" id="IPR023407">
    <property type="entry name" value="Ribosomal_eS27_Zn-bd_dom_sf"/>
</dbReference>
<dbReference type="InterPro" id="IPR011332">
    <property type="entry name" value="Ribosomal_zn-bd"/>
</dbReference>
<dbReference type="PANTHER" id="PTHR11594">
    <property type="entry name" value="40S RIBOSOMAL PROTEIN S27"/>
    <property type="match status" value="1"/>
</dbReference>
<dbReference type="Pfam" id="PF01667">
    <property type="entry name" value="Ribosomal_S27e"/>
    <property type="match status" value="1"/>
</dbReference>
<dbReference type="SUPFAM" id="SSF57829">
    <property type="entry name" value="Zn-binding ribosomal proteins"/>
    <property type="match status" value="1"/>
</dbReference>
<dbReference type="PROSITE" id="PS01168">
    <property type="entry name" value="RIBOSOMAL_S27E"/>
    <property type="match status" value="1"/>
</dbReference>
<accession>P24051</accession>